<comment type="function">
    <text evidence="4">Depletes iron from the phagolysosome in an ATP-dependent process. May rather act as a symporter of protons and metal cations in an ATP-dependent process. Nramp1 overexpression protected cells from L.pneumophila infection.</text>
</comment>
<comment type="subcellular location">
    <subcellularLocation>
        <location evidence="1">Membrane</location>
        <topology evidence="1">Multi-pass membrane protein</topology>
    </subcellularLocation>
    <text evidence="4">Located at vesicles of variable size, which are distributed all over the cytoplasm, in part clustered at a perinuclear site. Several tiny vesicles travel rapidly outward from and towards the perinuclear cluster. These vesicles are part of the endo- and phagolysosomal pathway.</text>
</comment>
<comment type="developmental stage">
    <text evidence="4">Expressed during the growth-phase and down-regulated to barely detectable levels upon starvation.</text>
</comment>
<comment type="disruption phenotype">
    <text evidence="4">More permissive hosts than wild-type cells for intracellular growth of L.pneumophila and M.avium.</text>
</comment>
<comment type="similarity">
    <text evidence="5">Belongs to the NRAMP family.</text>
</comment>
<organism>
    <name type="scientific">Dictyostelium discoideum</name>
    <name type="common">Social amoeba</name>
    <dbReference type="NCBI Taxonomy" id="44689"/>
    <lineage>
        <taxon>Eukaryota</taxon>
        <taxon>Amoebozoa</taxon>
        <taxon>Evosea</taxon>
        <taxon>Eumycetozoa</taxon>
        <taxon>Dictyostelia</taxon>
        <taxon>Dictyosteliales</taxon>
        <taxon>Dictyosteliaceae</taxon>
        <taxon>Dictyostelium</taxon>
    </lineage>
</organism>
<accession>Q869V1</accession>
<accession>Q550F8</accession>
<name>NRAM1_DICDI</name>
<feature type="chain" id="PRO_0000328222" description="Metal transporter nramp1 homolog">
    <location>
        <begin position="1"/>
        <end position="533"/>
    </location>
</feature>
<feature type="topological domain" description="Cytoplasmic" evidence="2">
    <location>
        <begin position="1"/>
        <end position="68"/>
    </location>
</feature>
<feature type="transmembrane region" description="Helical" evidence="2">
    <location>
        <begin position="69"/>
        <end position="89"/>
    </location>
</feature>
<feature type="topological domain" description="Extracellular" evidence="2">
    <location>
        <begin position="90"/>
        <end position="101"/>
    </location>
</feature>
<feature type="transmembrane region" description="Helical" evidence="2">
    <location>
        <begin position="102"/>
        <end position="122"/>
    </location>
</feature>
<feature type="topological domain" description="Cytoplasmic" evidence="2">
    <location>
        <begin position="123"/>
        <end position="158"/>
    </location>
</feature>
<feature type="transmembrane region" description="Helical" evidence="2">
    <location>
        <begin position="159"/>
        <end position="179"/>
    </location>
</feature>
<feature type="topological domain" description="Extracellular" evidence="2">
    <location>
        <begin position="180"/>
        <end position="182"/>
    </location>
</feature>
<feature type="transmembrane region" description="Helical" evidence="2">
    <location>
        <begin position="183"/>
        <end position="203"/>
    </location>
</feature>
<feature type="topological domain" description="Cytoplasmic" evidence="2">
    <location>
        <begin position="204"/>
        <end position="212"/>
    </location>
</feature>
<feature type="transmembrane region" description="Helical" evidence="2">
    <location>
        <begin position="213"/>
        <end position="233"/>
    </location>
</feature>
<feature type="topological domain" description="Extracellular" evidence="2">
    <location>
        <begin position="234"/>
        <end position="256"/>
    </location>
</feature>
<feature type="transmembrane region" description="Helical" evidence="2">
    <location>
        <begin position="257"/>
        <end position="277"/>
    </location>
</feature>
<feature type="topological domain" description="Cytoplasmic" evidence="2">
    <location>
        <begin position="278"/>
        <end position="302"/>
    </location>
</feature>
<feature type="transmembrane region" description="Helical" evidence="2">
    <location>
        <begin position="303"/>
        <end position="323"/>
    </location>
</feature>
<feature type="topological domain" description="Extracellular" evidence="2">
    <location>
        <begin position="324"/>
        <end position="348"/>
    </location>
</feature>
<feature type="transmembrane region" description="Helical" evidence="2">
    <location>
        <begin position="349"/>
        <end position="368"/>
    </location>
</feature>
<feature type="topological domain" description="Cytoplasmic" evidence="2">
    <location>
        <begin position="369"/>
        <end position="387"/>
    </location>
</feature>
<feature type="transmembrane region" description="Helical" evidence="2">
    <location>
        <begin position="388"/>
        <end position="408"/>
    </location>
</feature>
<feature type="topological domain" description="Extracellular" evidence="2">
    <location>
        <begin position="409"/>
        <end position="415"/>
    </location>
</feature>
<feature type="transmembrane region" description="Helical" evidence="2">
    <location>
        <begin position="416"/>
        <end position="436"/>
    </location>
</feature>
<feature type="topological domain" description="Cytoplasmic" evidence="2">
    <location>
        <begin position="437"/>
        <end position="457"/>
    </location>
</feature>
<feature type="transmembrane region" description="Helical" evidence="2">
    <location>
        <begin position="458"/>
        <end position="478"/>
    </location>
</feature>
<feature type="topological domain" description="Extracellular" evidence="2">
    <location>
        <begin position="479"/>
        <end position="481"/>
    </location>
</feature>
<feature type="transmembrane region" description="Helical" evidence="2">
    <location>
        <begin position="482"/>
        <end position="502"/>
    </location>
</feature>
<feature type="topological domain" description="Cytoplasmic" evidence="2">
    <location>
        <begin position="503"/>
        <end position="533"/>
    </location>
</feature>
<feature type="region of interest" description="Disordered" evidence="3">
    <location>
        <begin position="1"/>
        <end position="33"/>
    </location>
</feature>
<feature type="compositionally biased region" description="Low complexity" evidence="3">
    <location>
        <begin position="14"/>
        <end position="29"/>
    </location>
</feature>
<feature type="glycosylation site" description="N-linked (GlcNAc...) asparagine" evidence="2">
    <location>
        <position position="253"/>
    </location>
</feature>
<proteinExistence type="evidence at transcript level"/>
<sequence>MTPRIESEESAPLVNKNNNNNNDNNNNNNVDEENPLIIESGIPIEDLEQKNKPYLIKVPNIDKPDSKWINFKTLWAFTGPGFLMSIAYLDPGNLESDIQAGAMAGYQLLWVLFWSTVIGFWLQMLASRLGVVTGKHLAEHCREQYPKTPRLLLWLMTELAIIGSDIQEVIGTAIALQILSNGHIPLWAGVLFTAADTFTFLFLEKYGIRKLEAFFCSLIAIMAISFGVEYIISKPDQIEVVKGVFIPLCSQNNISQAVGILGAVVMPHNIYLHSALVQSREIDRKSETQVKIANKYNRLESAFALIISFIINLLLVSVFAKGFYGETTEIGLSSAADFLMDKYGKVAKYIWAIGLFSAGQCSTMTGTYSGQFVMEGFLKLKIAPWKRLLITRCTAIVPAMVVAILSTSHLDSLDQWLNILQSIQLPFAVVPVLLFTSSEKIMGSKFKNHWLNNQFVRFLSLLIIAINIYLIITFSMQISESAWMISIVSISFFFYFIFIVYLSMGQENFNSMTKKIKNLFNNNSNQTYNNINY</sequence>
<evidence type="ECO:0000250" key="1"/>
<evidence type="ECO:0000255" key="2"/>
<evidence type="ECO:0000256" key="3">
    <source>
        <dbReference type="SAM" id="MobiDB-lite"/>
    </source>
</evidence>
<evidence type="ECO:0000269" key="4">
    <source>
    </source>
</evidence>
<evidence type="ECO:0000305" key="5"/>
<keyword id="KW-0325">Glycoprotein</keyword>
<keyword id="KW-0406">Ion transport</keyword>
<keyword id="KW-0408">Iron</keyword>
<keyword id="KW-0410">Iron transport</keyword>
<keyword id="KW-0472">Membrane</keyword>
<keyword id="KW-1185">Reference proteome</keyword>
<keyword id="KW-0812">Transmembrane</keyword>
<keyword id="KW-1133">Transmembrane helix</keyword>
<keyword id="KW-0813">Transport</keyword>
<dbReference type="EMBL" id="AAFI02000019">
    <property type="protein sequence ID" value="EAL68988.1"/>
    <property type="molecule type" value="Genomic_DNA"/>
</dbReference>
<dbReference type="RefSeq" id="XP_642974.1">
    <property type="nucleotide sequence ID" value="XM_637882.1"/>
</dbReference>
<dbReference type="SMR" id="Q869V1"/>
<dbReference type="FunCoup" id="Q869V1">
    <property type="interactions" value="229"/>
</dbReference>
<dbReference type="STRING" id="44689.Q869V1"/>
<dbReference type="TCDB" id="2.A.55.2.9">
    <property type="family name" value="the metal ion (mn(2+)-iron) transporter (nramp) family"/>
</dbReference>
<dbReference type="GlyCosmos" id="Q869V1">
    <property type="glycosylation" value="1 site, No reported glycans"/>
</dbReference>
<dbReference type="GlyGen" id="Q869V1">
    <property type="glycosylation" value="1 site"/>
</dbReference>
<dbReference type="PaxDb" id="44689-DDB0232113"/>
<dbReference type="EnsemblProtists" id="EAL68988">
    <property type="protein sequence ID" value="EAL68988"/>
    <property type="gene ID" value="DDB_G0276973"/>
</dbReference>
<dbReference type="GeneID" id="8620846"/>
<dbReference type="KEGG" id="ddi:DDB_G0276973"/>
<dbReference type="dictyBase" id="DDB_G0276973">
    <property type="gene designation" value="nramp1"/>
</dbReference>
<dbReference type="VEuPathDB" id="AmoebaDB:DDB_G0276973"/>
<dbReference type="eggNOG" id="KOG1291">
    <property type="taxonomic scope" value="Eukaryota"/>
</dbReference>
<dbReference type="HOGENOM" id="CLU_020088_5_1_1"/>
<dbReference type="InParanoid" id="Q869V1"/>
<dbReference type="OMA" id="STYLVWT"/>
<dbReference type="PhylomeDB" id="Q869V1"/>
<dbReference type="Reactome" id="R-DDI-1222556">
    <property type="pathway name" value="ROS and RNS production in phagocytes"/>
</dbReference>
<dbReference type="Reactome" id="R-DDI-425410">
    <property type="pathway name" value="Metal ion SLC transporters"/>
</dbReference>
<dbReference type="Reactome" id="R-DDI-6798695">
    <property type="pathway name" value="Neutrophil degranulation"/>
</dbReference>
<dbReference type="Reactome" id="R-DDI-6803544">
    <property type="pathway name" value="Ion influx/efflux at host-pathogen interface"/>
</dbReference>
<dbReference type="Reactome" id="R-DDI-917937">
    <property type="pathway name" value="Iron uptake and transport"/>
</dbReference>
<dbReference type="PRO" id="PR:Q869V1"/>
<dbReference type="Proteomes" id="UP000002195">
    <property type="component" value="Chromosome 2"/>
</dbReference>
<dbReference type="GO" id="GO:0010008">
    <property type="term" value="C:endosome membrane"/>
    <property type="evidence" value="ECO:0000318"/>
    <property type="project" value="GO_Central"/>
</dbReference>
<dbReference type="GO" id="GO:0044354">
    <property type="term" value="C:macropinosome"/>
    <property type="evidence" value="ECO:0000314"/>
    <property type="project" value="dictyBase"/>
</dbReference>
<dbReference type="GO" id="GO:0016020">
    <property type="term" value="C:membrane"/>
    <property type="evidence" value="ECO:0000314"/>
    <property type="project" value="dictyBase"/>
</dbReference>
<dbReference type="GO" id="GO:0032010">
    <property type="term" value="C:phagolysosome"/>
    <property type="evidence" value="ECO:0000314"/>
    <property type="project" value="dictyBase"/>
</dbReference>
<dbReference type="GO" id="GO:0005886">
    <property type="term" value="C:plasma membrane"/>
    <property type="evidence" value="ECO:0000318"/>
    <property type="project" value="GO_Central"/>
</dbReference>
<dbReference type="GO" id="GO:0005802">
    <property type="term" value="C:trans-Golgi network"/>
    <property type="evidence" value="ECO:0000314"/>
    <property type="project" value="dictyBase"/>
</dbReference>
<dbReference type="GO" id="GO:0012506">
    <property type="term" value="C:vesicle membrane"/>
    <property type="evidence" value="ECO:0000314"/>
    <property type="project" value="dictyBase"/>
</dbReference>
<dbReference type="GO" id="GO:0015086">
    <property type="term" value="F:cadmium ion transmembrane transporter activity"/>
    <property type="evidence" value="ECO:0000318"/>
    <property type="project" value="GO_Central"/>
</dbReference>
<dbReference type="GO" id="GO:0015093">
    <property type="term" value="F:ferrous iron transmembrane transporter activity"/>
    <property type="evidence" value="ECO:0000314"/>
    <property type="project" value="dictyBase"/>
</dbReference>
<dbReference type="GO" id="GO:0005381">
    <property type="term" value="F:iron ion transmembrane transporter activity"/>
    <property type="evidence" value="ECO:0000314"/>
    <property type="project" value="dictyBase"/>
</dbReference>
<dbReference type="GO" id="GO:0005384">
    <property type="term" value="F:manganese ion transmembrane transporter activity"/>
    <property type="evidence" value="ECO:0000318"/>
    <property type="project" value="GO_Central"/>
</dbReference>
<dbReference type="GO" id="GO:0042742">
    <property type="term" value="P:defense response to bacterium"/>
    <property type="evidence" value="ECO:0000315"/>
    <property type="project" value="dictyBase"/>
</dbReference>
<dbReference type="GO" id="GO:0034755">
    <property type="term" value="P:iron ion transmembrane transport"/>
    <property type="evidence" value="ECO:0000314"/>
    <property type="project" value="dictyBase"/>
</dbReference>
<dbReference type="GO" id="GO:0006828">
    <property type="term" value="P:manganese ion transport"/>
    <property type="evidence" value="ECO:0000314"/>
    <property type="project" value="dictyBase"/>
</dbReference>
<dbReference type="GO" id="GO:0006909">
    <property type="term" value="P:phagocytosis"/>
    <property type="evidence" value="ECO:0000270"/>
    <property type="project" value="dictyBase"/>
</dbReference>
<dbReference type="GO" id="GO:0009617">
    <property type="term" value="P:response to bacterium"/>
    <property type="evidence" value="ECO:0000315"/>
    <property type="project" value="dictyBase"/>
</dbReference>
<dbReference type="GO" id="GO:1902351">
    <property type="term" value="P:response to imidacloprid"/>
    <property type="evidence" value="ECO:0000270"/>
    <property type="project" value="dictyBase"/>
</dbReference>
<dbReference type="HAMAP" id="MF_00221">
    <property type="entry name" value="NRAMP"/>
    <property type="match status" value="1"/>
</dbReference>
<dbReference type="InterPro" id="IPR001046">
    <property type="entry name" value="NRAMP_fam"/>
</dbReference>
<dbReference type="NCBIfam" id="TIGR01197">
    <property type="entry name" value="nramp"/>
    <property type="match status" value="1"/>
</dbReference>
<dbReference type="NCBIfam" id="NF037982">
    <property type="entry name" value="Nramp_1"/>
    <property type="match status" value="1"/>
</dbReference>
<dbReference type="PANTHER" id="PTHR11706:SF33">
    <property type="entry name" value="NATURAL RESISTANCE-ASSOCIATED MACROPHAGE PROTEIN 2"/>
    <property type="match status" value="1"/>
</dbReference>
<dbReference type="PANTHER" id="PTHR11706">
    <property type="entry name" value="SOLUTE CARRIER PROTEIN FAMILY 11 MEMBER"/>
    <property type="match status" value="1"/>
</dbReference>
<dbReference type="Pfam" id="PF01566">
    <property type="entry name" value="Nramp"/>
    <property type="match status" value="1"/>
</dbReference>
<dbReference type="PRINTS" id="PR00447">
    <property type="entry name" value="NATRESASSCMP"/>
</dbReference>
<reference key="1">
    <citation type="journal article" date="2002" name="Nature">
        <title>Sequence and analysis of chromosome 2 of Dictyostelium discoideum.</title>
        <authorList>
            <person name="Gloeckner G."/>
            <person name="Eichinger L."/>
            <person name="Szafranski K."/>
            <person name="Pachebat J.A."/>
            <person name="Bankier A.T."/>
            <person name="Dear P.H."/>
            <person name="Lehmann R."/>
            <person name="Baumgart C."/>
            <person name="Parra G."/>
            <person name="Abril J.F."/>
            <person name="Guigo R."/>
            <person name="Kumpf K."/>
            <person name="Tunggal B."/>
            <person name="Cox E.C."/>
            <person name="Quail M.A."/>
            <person name="Platzer M."/>
            <person name="Rosenthal A."/>
            <person name="Noegel A.A."/>
        </authorList>
    </citation>
    <scope>NUCLEOTIDE SEQUENCE [LARGE SCALE GENOMIC DNA]</scope>
    <source>
        <strain>AX4</strain>
    </source>
</reference>
<reference key="2">
    <citation type="journal article" date="2005" name="Nature">
        <title>The genome of the social amoeba Dictyostelium discoideum.</title>
        <authorList>
            <person name="Eichinger L."/>
            <person name="Pachebat J.A."/>
            <person name="Gloeckner G."/>
            <person name="Rajandream M.A."/>
            <person name="Sucgang R."/>
            <person name="Berriman M."/>
            <person name="Song J."/>
            <person name="Olsen R."/>
            <person name="Szafranski K."/>
            <person name="Xu Q."/>
            <person name="Tunggal B."/>
            <person name="Kummerfeld S."/>
            <person name="Madera M."/>
            <person name="Konfortov B.A."/>
            <person name="Rivero F."/>
            <person name="Bankier A.T."/>
            <person name="Lehmann R."/>
            <person name="Hamlin N."/>
            <person name="Davies R."/>
            <person name="Gaudet P."/>
            <person name="Fey P."/>
            <person name="Pilcher K."/>
            <person name="Chen G."/>
            <person name="Saunders D."/>
            <person name="Sodergren E.J."/>
            <person name="Davis P."/>
            <person name="Kerhornou A."/>
            <person name="Nie X."/>
            <person name="Hall N."/>
            <person name="Anjard C."/>
            <person name="Hemphill L."/>
            <person name="Bason N."/>
            <person name="Farbrother P."/>
            <person name="Desany B."/>
            <person name="Just E."/>
            <person name="Morio T."/>
            <person name="Rost R."/>
            <person name="Churcher C.M."/>
            <person name="Cooper J."/>
            <person name="Haydock S."/>
            <person name="van Driessche N."/>
            <person name="Cronin A."/>
            <person name="Goodhead I."/>
            <person name="Muzny D.M."/>
            <person name="Mourier T."/>
            <person name="Pain A."/>
            <person name="Lu M."/>
            <person name="Harper D."/>
            <person name="Lindsay R."/>
            <person name="Hauser H."/>
            <person name="James K.D."/>
            <person name="Quiles M."/>
            <person name="Madan Babu M."/>
            <person name="Saito T."/>
            <person name="Buchrieser C."/>
            <person name="Wardroper A."/>
            <person name="Felder M."/>
            <person name="Thangavelu M."/>
            <person name="Johnson D."/>
            <person name="Knights A."/>
            <person name="Loulseged H."/>
            <person name="Mungall K.L."/>
            <person name="Oliver K."/>
            <person name="Price C."/>
            <person name="Quail M.A."/>
            <person name="Urushihara H."/>
            <person name="Hernandez J."/>
            <person name="Rabbinowitsch E."/>
            <person name="Steffen D."/>
            <person name="Sanders M."/>
            <person name="Ma J."/>
            <person name="Kohara Y."/>
            <person name="Sharp S."/>
            <person name="Simmonds M.N."/>
            <person name="Spiegler S."/>
            <person name="Tivey A."/>
            <person name="Sugano S."/>
            <person name="White B."/>
            <person name="Walker D."/>
            <person name="Woodward J.R."/>
            <person name="Winckler T."/>
            <person name="Tanaka Y."/>
            <person name="Shaulsky G."/>
            <person name="Schleicher M."/>
            <person name="Weinstock G.M."/>
            <person name="Rosenthal A."/>
            <person name="Cox E.C."/>
            <person name="Chisholm R.L."/>
            <person name="Gibbs R.A."/>
            <person name="Loomis W.F."/>
            <person name="Platzer M."/>
            <person name="Kay R.R."/>
            <person name="Williams J.G."/>
            <person name="Dear P.H."/>
            <person name="Noegel A.A."/>
            <person name="Barrell B.G."/>
            <person name="Kuspa A."/>
        </authorList>
    </citation>
    <scope>NUCLEOTIDE SEQUENCE [LARGE SCALE GENOMIC DNA]</scope>
    <source>
        <strain>AX4</strain>
    </source>
</reference>
<reference key="3">
    <citation type="journal article" date="2006" name="Traffic">
        <title>Function and mechanism of action of Dictyostelium Nramp1 (Slc11a1) in bacterial infection.</title>
        <authorList>
            <person name="Peracino B."/>
            <person name="Wagner C."/>
            <person name="Balest A."/>
            <person name="Balbo A."/>
            <person name="Pergolizzi B."/>
            <person name="Noegel A.A."/>
            <person name="Steinert M."/>
            <person name="Bozzaro S."/>
        </authorList>
    </citation>
    <scope>FUNCTION</scope>
    <scope>DEVELOPMENTAL STAGE</scope>
    <scope>DISRUPTION PHENOTYPE</scope>
    <scope>SUBCELLULAR LOCATION</scope>
</reference>
<gene>
    <name type="primary">nramp1</name>
    <name type="synonym">nramp</name>
    <name type="synonym">slc11a1</name>
    <name type="ORF">DDB_G0276973</name>
</gene>
<protein>
    <recommendedName>
        <fullName>Metal transporter nramp1 homolog</fullName>
    </recommendedName>
    <alternativeName>
        <fullName>Natural resistance-associated membrane protein 1</fullName>
    </alternativeName>
</protein>